<reference key="1">
    <citation type="journal article" date="2003" name="DNA Res.">
        <title>Complete genome structure of Gloeobacter violaceus PCC 7421, a cyanobacterium that lacks thylakoids.</title>
        <authorList>
            <person name="Nakamura Y."/>
            <person name="Kaneko T."/>
            <person name="Sato S."/>
            <person name="Mimuro M."/>
            <person name="Miyashita H."/>
            <person name="Tsuchiya T."/>
            <person name="Sasamoto S."/>
            <person name="Watanabe A."/>
            <person name="Kawashima K."/>
            <person name="Kishida Y."/>
            <person name="Kiyokawa C."/>
            <person name="Kohara M."/>
            <person name="Matsumoto M."/>
            <person name="Matsuno A."/>
            <person name="Nakazaki N."/>
            <person name="Shimpo S."/>
            <person name="Takeuchi C."/>
            <person name="Yamada M."/>
            <person name="Tabata S."/>
        </authorList>
    </citation>
    <scope>NUCLEOTIDE SEQUENCE [LARGE SCALE GENOMIC DNA]</scope>
    <source>
        <strain>ATCC 29082 / PCC 7421</strain>
    </source>
</reference>
<gene>
    <name evidence="1" type="primary">nadK1</name>
    <name type="ordered locus">gll0473</name>
</gene>
<proteinExistence type="inferred from homology"/>
<name>NADK1_GLOVI</name>
<keyword id="KW-0067">ATP-binding</keyword>
<keyword id="KW-0963">Cytoplasm</keyword>
<keyword id="KW-0418">Kinase</keyword>
<keyword id="KW-0520">NAD</keyword>
<keyword id="KW-0521">NADP</keyword>
<keyword id="KW-0547">Nucleotide-binding</keyword>
<keyword id="KW-1185">Reference proteome</keyword>
<keyword id="KW-0808">Transferase</keyword>
<dbReference type="EC" id="2.7.1.23" evidence="1"/>
<dbReference type="EMBL" id="BA000045">
    <property type="protein sequence ID" value="BAC88414.1"/>
    <property type="molecule type" value="Genomic_DNA"/>
</dbReference>
<dbReference type="RefSeq" id="NP_923419.1">
    <property type="nucleotide sequence ID" value="NC_005125.1"/>
</dbReference>
<dbReference type="RefSeq" id="WP_011140476.1">
    <property type="nucleotide sequence ID" value="NC_005125.1"/>
</dbReference>
<dbReference type="SMR" id="Q7NND8"/>
<dbReference type="STRING" id="251221.gene:10757945"/>
<dbReference type="EnsemblBacteria" id="BAC88414">
    <property type="protein sequence ID" value="BAC88414"/>
    <property type="gene ID" value="BAC88414"/>
</dbReference>
<dbReference type="KEGG" id="gvi:gll0473"/>
<dbReference type="PATRIC" id="fig|251221.4.peg.481"/>
<dbReference type="eggNOG" id="COG0061">
    <property type="taxonomic scope" value="Bacteria"/>
</dbReference>
<dbReference type="HOGENOM" id="CLU_008831_0_1_3"/>
<dbReference type="InParanoid" id="Q7NND8"/>
<dbReference type="OrthoDB" id="9774737at2"/>
<dbReference type="PhylomeDB" id="Q7NND8"/>
<dbReference type="Proteomes" id="UP000000557">
    <property type="component" value="Chromosome"/>
</dbReference>
<dbReference type="GO" id="GO:0005737">
    <property type="term" value="C:cytoplasm"/>
    <property type="evidence" value="ECO:0007669"/>
    <property type="project" value="UniProtKB-SubCell"/>
</dbReference>
<dbReference type="GO" id="GO:0005524">
    <property type="term" value="F:ATP binding"/>
    <property type="evidence" value="ECO:0007669"/>
    <property type="project" value="UniProtKB-KW"/>
</dbReference>
<dbReference type="GO" id="GO:0046872">
    <property type="term" value="F:metal ion binding"/>
    <property type="evidence" value="ECO:0007669"/>
    <property type="project" value="UniProtKB-UniRule"/>
</dbReference>
<dbReference type="GO" id="GO:0051287">
    <property type="term" value="F:NAD binding"/>
    <property type="evidence" value="ECO:0007669"/>
    <property type="project" value="UniProtKB-ARBA"/>
</dbReference>
<dbReference type="GO" id="GO:0003951">
    <property type="term" value="F:NAD+ kinase activity"/>
    <property type="evidence" value="ECO:0000318"/>
    <property type="project" value="GO_Central"/>
</dbReference>
<dbReference type="GO" id="GO:0019674">
    <property type="term" value="P:NAD metabolic process"/>
    <property type="evidence" value="ECO:0007669"/>
    <property type="project" value="InterPro"/>
</dbReference>
<dbReference type="GO" id="GO:0006741">
    <property type="term" value="P:NADP biosynthetic process"/>
    <property type="evidence" value="ECO:0000318"/>
    <property type="project" value="GO_Central"/>
</dbReference>
<dbReference type="Gene3D" id="3.40.50.10330">
    <property type="entry name" value="Probable inorganic polyphosphate/atp-NAD kinase, domain 1"/>
    <property type="match status" value="1"/>
</dbReference>
<dbReference type="Gene3D" id="2.60.200.30">
    <property type="entry name" value="Probable inorganic polyphosphate/atp-NAD kinase, domain 2"/>
    <property type="match status" value="1"/>
</dbReference>
<dbReference type="HAMAP" id="MF_00361">
    <property type="entry name" value="NAD_kinase"/>
    <property type="match status" value="1"/>
</dbReference>
<dbReference type="InterPro" id="IPR017438">
    <property type="entry name" value="ATP-NAD_kinase_N"/>
</dbReference>
<dbReference type="InterPro" id="IPR017437">
    <property type="entry name" value="ATP-NAD_kinase_PpnK-typ_C"/>
</dbReference>
<dbReference type="InterPro" id="IPR016064">
    <property type="entry name" value="NAD/diacylglycerol_kinase_sf"/>
</dbReference>
<dbReference type="InterPro" id="IPR002504">
    <property type="entry name" value="NADK"/>
</dbReference>
<dbReference type="NCBIfam" id="NF002731">
    <property type="entry name" value="PRK02645.1"/>
    <property type="match status" value="1"/>
</dbReference>
<dbReference type="PANTHER" id="PTHR20275">
    <property type="entry name" value="NAD KINASE"/>
    <property type="match status" value="1"/>
</dbReference>
<dbReference type="PANTHER" id="PTHR20275:SF0">
    <property type="entry name" value="NAD KINASE"/>
    <property type="match status" value="1"/>
</dbReference>
<dbReference type="Pfam" id="PF01513">
    <property type="entry name" value="NAD_kinase"/>
    <property type="match status" value="1"/>
</dbReference>
<dbReference type="Pfam" id="PF20143">
    <property type="entry name" value="NAD_kinase_C"/>
    <property type="match status" value="1"/>
</dbReference>
<dbReference type="SUPFAM" id="SSF111331">
    <property type="entry name" value="NAD kinase/diacylglycerol kinase-like"/>
    <property type="match status" value="1"/>
</dbReference>
<comment type="function">
    <text evidence="1">Involved in the regulation of the intracellular balance of NAD and NADP, and is a key enzyme in the biosynthesis of NADP. Catalyzes specifically the phosphorylation on 2'-hydroxyl of the adenosine moiety of NAD to yield NADP.</text>
</comment>
<comment type="catalytic activity">
    <reaction evidence="1">
        <text>NAD(+) + ATP = ADP + NADP(+) + H(+)</text>
        <dbReference type="Rhea" id="RHEA:18629"/>
        <dbReference type="ChEBI" id="CHEBI:15378"/>
        <dbReference type="ChEBI" id="CHEBI:30616"/>
        <dbReference type="ChEBI" id="CHEBI:57540"/>
        <dbReference type="ChEBI" id="CHEBI:58349"/>
        <dbReference type="ChEBI" id="CHEBI:456216"/>
        <dbReference type="EC" id="2.7.1.23"/>
    </reaction>
</comment>
<comment type="cofactor">
    <cofactor evidence="1">
        <name>a divalent metal cation</name>
        <dbReference type="ChEBI" id="CHEBI:60240"/>
    </cofactor>
</comment>
<comment type="subcellular location">
    <subcellularLocation>
        <location evidence="1">Cytoplasm</location>
    </subcellularLocation>
</comment>
<comment type="similarity">
    <text evidence="1">Belongs to the NAD kinase family.</text>
</comment>
<feature type="chain" id="PRO_0000229641" description="NAD kinase 1">
    <location>
        <begin position="1"/>
        <end position="310"/>
    </location>
</feature>
<feature type="active site" description="Proton acceptor" evidence="1">
    <location>
        <position position="68"/>
    </location>
</feature>
<feature type="binding site" evidence="1">
    <location>
        <begin position="68"/>
        <end position="69"/>
    </location>
    <ligand>
        <name>NAD(+)</name>
        <dbReference type="ChEBI" id="CHEBI:57540"/>
    </ligand>
</feature>
<feature type="binding site" evidence="1">
    <location>
        <begin position="145"/>
        <end position="146"/>
    </location>
    <ligand>
        <name>NAD(+)</name>
        <dbReference type="ChEBI" id="CHEBI:57540"/>
    </ligand>
</feature>
<feature type="binding site" evidence="1">
    <location>
        <position position="156"/>
    </location>
    <ligand>
        <name>NAD(+)</name>
        <dbReference type="ChEBI" id="CHEBI:57540"/>
    </ligand>
</feature>
<feature type="binding site" evidence="1">
    <location>
        <position position="175"/>
    </location>
    <ligand>
        <name>NAD(+)</name>
        <dbReference type="ChEBI" id="CHEBI:57540"/>
    </ligand>
</feature>
<feature type="binding site" evidence="1">
    <location>
        <position position="177"/>
    </location>
    <ligand>
        <name>NAD(+)</name>
        <dbReference type="ChEBI" id="CHEBI:57540"/>
    </ligand>
</feature>
<organism>
    <name type="scientific">Gloeobacter violaceus (strain ATCC 29082 / PCC 7421)</name>
    <dbReference type="NCBI Taxonomy" id="251221"/>
    <lineage>
        <taxon>Bacteria</taxon>
        <taxon>Bacillati</taxon>
        <taxon>Cyanobacteriota</taxon>
        <taxon>Cyanophyceae</taxon>
        <taxon>Gloeobacterales</taxon>
        <taxon>Gloeobacteraceae</taxon>
        <taxon>Gloeobacter</taxon>
    </lineage>
</organism>
<accession>Q7NND8</accession>
<sequence>MPAFETVVIAYRAEEAHSRIAADRCESLLHKVGCRVLKGPTGPQDNPYPHFLEATGGHIDLAIVLGGDGSILAAARYLAAVDVPILAVNVGGHLGFLTQPPEVLGGRYWERLLAGEWELEKRMMLQASLTGPPPLPERQPYFCLNEFCLKPASEMRLTSIILELAIDGEIIDQIHGDGLLVSTPTGSTSYTVAANGPIIAPSLQAITITPICPLSLSSRPVVLPATGTIEVSPLRDPDLNIKLWSDGAFAAPVHPCQTVRIEVARHPTRLLILEEDHSYFRTLREKLKWAGTRIQAERDPECLLPPQNHP</sequence>
<evidence type="ECO:0000255" key="1">
    <source>
        <dbReference type="HAMAP-Rule" id="MF_00361"/>
    </source>
</evidence>
<protein>
    <recommendedName>
        <fullName evidence="1">NAD kinase 1</fullName>
        <ecNumber evidence="1">2.7.1.23</ecNumber>
    </recommendedName>
    <alternativeName>
        <fullName evidence="1">ATP-dependent NAD kinase 1</fullName>
    </alternativeName>
</protein>